<dbReference type="EMBL" id="AC007232">
    <property type="status" value="NOT_ANNOTATED_CDS"/>
    <property type="molecule type" value="Genomic_DNA"/>
</dbReference>
<dbReference type="EMBL" id="CP002685">
    <property type="protein sequence ID" value="AEC07257.1"/>
    <property type="molecule type" value="Genomic_DNA"/>
</dbReference>
<dbReference type="EMBL" id="EG514705">
    <property type="status" value="NOT_ANNOTATED_CDS"/>
    <property type="molecule type" value="mRNA"/>
</dbReference>
<dbReference type="RefSeq" id="NP_001318265.1">
    <property type="nucleotide sequence ID" value="NM_001335782.1"/>
</dbReference>
<dbReference type="SMR" id="A8MQM7"/>
<dbReference type="STRING" id="3702.A8MQM7"/>
<dbReference type="PaxDb" id="3702-AT2G22055.1"/>
<dbReference type="EnsemblPlants" id="AT2G22055.1">
    <property type="protein sequence ID" value="AT2G22055.1"/>
    <property type="gene ID" value="AT2G22055"/>
</dbReference>
<dbReference type="GeneID" id="28718292"/>
<dbReference type="Gramene" id="AT2G22055.1">
    <property type="protein sequence ID" value="AT2G22055.1"/>
    <property type="gene ID" value="AT2G22055"/>
</dbReference>
<dbReference type="KEGG" id="ath:AT2G22055"/>
<dbReference type="Araport" id="AT2G22055"/>
<dbReference type="TAIR" id="AT2G22055">
    <property type="gene designation" value="RALFL15"/>
</dbReference>
<dbReference type="eggNOG" id="ENOG502SW1C">
    <property type="taxonomic scope" value="Eukaryota"/>
</dbReference>
<dbReference type="HOGENOM" id="CLU_184731_1_0_1"/>
<dbReference type="InParanoid" id="A8MQM7"/>
<dbReference type="OMA" id="PNTCKKQ"/>
<dbReference type="OrthoDB" id="1090286at2759"/>
<dbReference type="PhylomeDB" id="A8MQM7"/>
<dbReference type="PRO" id="PR:A8MQM7"/>
<dbReference type="Proteomes" id="UP000006548">
    <property type="component" value="Chromosome 2"/>
</dbReference>
<dbReference type="ExpressionAtlas" id="A8MQM7">
    <property type="expression patterns" value="baseline and differential"/>
</dbReference>
<dbReference type="GO" id="GO:0048046">
    <property type="term" value="C:apoplast"/>
    <property type="evidence" value="ECO:0000250"/>
    <property type="project" value="TAIR"/>
</dbReference>
<dbReference type="GO" id="GO:0005179">
    <property type="term" value="F:hormone activity"/>
    <property type="evidence" value="ECO:0000250"/>
    <property type="project" value="UniProtKB"/>
</dbReference>
<dbReference type="GO" id="GO:0019722">
    <property type="term" value="P:calcium-mediated signaling"/>
    <property type="evidence" value="ECO:0000250"/>
    <property type="project" value="UniProtKB"/>
</dbReference>
<dbReference type="GO" id="GO:0007267">
    <property type="term" value="P:cell-cell signaling"/>
    <property type="evidence" value="ECO:0000250"/>
    <property type="project" value="TAIR"/>
</dbReference>
<dbReference type="GO" id="GO:0040008">
    <property type="term" value="P:regulation of growth"/>
    <property type="evidence" value="ECO:0007669"/>
    <property type="project" value="UniProtKB-ARBA"/>
</dbReference>
<dbReference type="InterPro" id="IPR008801">
    <property type="entry name" value="RALF"/>
</dbReference>
<dbReference type="PANTHER" id="PTHR34270">
    <property type="entry name" value="PROTEIN RALF-LIKE 15-RELATED"/>
    <property type="match status" value="1"/>
</dbReference>
<dbReference type="PANTHER" id="PTHR34270:SF12">
    <property type="entry name" value="PROTEIN RALF-LIKE 15-RELATED"/>
    <property type="match status" value="1"/>
</dbReference>
<dbReference type="Pfam" id="PF05498">
    <property type="entry name" value="RALF"/>
    <property type="match status" value="1"/>
</dbReference>
<feature type="signal peptide" evidence="2">
    <location>
        <begin position="1"/>
        <end position="28"/>
    </location>
</feature>
<feature type="chain" id="PRO_0000420307" description="Protein RALF-like 15">
    <location>
        <begin position="29"/>
        <end position="79"/>
    </location>
</feature>
<feature type="disulfide bond" evidence="1">
    <location>
        <begin position="46"/>
        <end position="54"/>
    </location>
</feature>
<feature type="disulfide bond" evidence="1">
    <location>
        <begin position="66"/>
        <end position="72"/>
    </location>
</feature>
<proteinExistence type="inferred from homology"/>
<gene>
    <name type="primary">RALFL15</name>
    <name type="ordered locus">At2g22055</name>
    <name type="ORF">T16B14</name>
</gene>
<organism>
    <name type="scientific">Arabidopsis thaliana</name>
    <name type="common">Mouse-ear cress</name>
    <dbReference type="NCBI Taxonomy" id="3702"/>
    <lineage>
        <taxon>Eukaryota</taxon>
        <taxon>Viridiplantae</taxon>
        <taxon>Streptophyta</taxon>
        <taxon>Embryophyta</taxon>
        <taxon>Tracheophyta</taxon>
        <taxon>Spermatophyta</taxon>
        <taxon>Magnoliopsida</taxon>
        <taxon>eudicotyledons</taxon>
        <taxon>Gunneridae</taxon>
        <taxon>Pentapetalae</taxon>
        <taxon>rosids</taxon>
        <taxon>malvids</taxon>
        <taxon>Brassicales</taxon>
        <taxon>Brassicaceae</taxon>
        <taxon>Camelineae</taxon>
        <taxon>Arabidopsis</taxon>
    </lineage>
</organism>
<evidence type="ECO:0000250" key="1"/>
<evidence type="ECO:0000255" key="2"/>
<evidence type="ECO:0000305" key="3"/>
<sequence length="79" mass="8830">MGMSKSIKVIVSLALILFLALAATKVEATRYISYRGMNHGDHAIHCDKAHPNTCKKQVANPYRRGCGTIERCRRDTGRK</sequence>
<protein>
    <recommendedName>
        <fullName>Protein RALF-like 15</fullName>
    </recommendedName>
</protein>
<comment type="function">
    <text evidence="1">Cell signaling peptide that may regulate plant stress, growth, and development. Mediates a rapid alkalinization of extracellular space by mediating a transient increase in the cytoplasmic Ca(2+) concentration leading to a calcium-dependent signaling events through a cell surface receptor and a concomitant activation of some intracellular mitogen-activated protein kinases (By similarity).</text>
</comment>
<comment type="subcellular location">
    <subcellularLocation>
        <location evidence="1">Secreted</location>
    </subcellularLocation>
</comment>
<comment type="similarity">
    <text evidence="3">Belongs to the plant rapid alkalinization factor (RALF) family.</text>
</comment>
<keyword id="KW-1015">Disulfide bond</keyword>
<keyword id="KW-0372">Hormone</keyword>
<keyword id="KW-1185">Reference proteome</keyword>
<keyword id="KW-0964">Secreted</keyword>
<keyword id="KW-0732">Signal</keyword>
<reference key="1">
    <citation type="journal article" date="1999" name="Nature">
        <title>Sequence and analysis of chromosome 2 of the plant Arabidopsis thaliana.</title>
        <authorList>
            <person name="Lin X."/>
            <person name="Kaul S."/>
            <person name="Rounsley S.D."/>
            <person name="Shea T.P."/>
            <person name="Benito M.-I."/>
            <person name="Town C.D."/>
            <person name="Fujii C.Y."/>
            <person name="Mason T.M."/>
            <person name="Bowman C.L."/>
            <person name="Barnstead M.E."/>
            <person name="Feldblyum T.V."/>
            <person name="Buell C.R."/>
            <person name="Ketchum K.A."/>
            <person name="Lee J.J."/>
            <person name="Ronning C.M."/>
            <person name="Koo H.L."/>
            <person name="Moffat K.S."/>
            <person name="Cronin L.A."/>
            <person name="Shen M."/>
            <person name="Pai G."/>
            <person name="Van Aken S."/>
            <person name="Umayam L."/>
            <person name="Tallon L.J."/>
            <person name="Gill J.E."/>
            <person name="Adams M.D."/>
            <person name="Carrera A.J."/>
            <person name="Creasy T.H."/>
            <person name="Goodman H.M."/>
            <person name="Somerville C.R."/>
            <person name="Copenhaver G.P."/>
            <person name="Preuss D."/>
            <person name="Nierman W.C."/>
            <person name="White O."/>
            <person name="Eisen J.A."/>
            <person name="Salzberg S.L."/>
            <person name="Fraser C.M."/>
            <person name="Venter J.C."/>
        </authorList>
    </citation>
    <scope>NUCLEOTIDE SEQUENCE [LARGE SCALE GENOMIC DNA]</scope>
    <source>
        <strain>cv. Columbia</strain>
    </source>
</reference>
<reference key="2">
    <citation type="journal article" date="2017" name="Plant J.">
        <title>Araport11: a complete reannotation of the Arabidopsis thaliana reference genome.</title>
        <authorList>
            <person name="Cheng C.Y."/>
            <person name="Krishnakumar V."/>
            <person name="Chan A.P."/>
            <person name="Thibaud-Nissen F."/>
            <person name="Schobel S."/>
            <person name="Town C.D."/>
        </authorList>
    </citation>
    <scope>GENOME REANNOTATION</scope>
    <source>
        <strain>cv. Columbia</strain>
    </source>
</reference>
<reference key="3">
    <citation type="submission" date="2006-10" db="EMBL/GenBank/DDBJ databases">
        <authorList>
            <person name="Underwood B.A."/>
            <person name="Xiao Y.-L."/>
            <person name="Moskal W.A. Jr."/>
            <person name="Monaghan E.L."/>
            <person name="Wang W."/>
            <person name="Redman J.C."/>
            <person name="Wu H.C."/>
            <person name="Utterback T."/>
            <person name="Town C.D."/>
        </authorList>
    </citation>
    <scope>NUCLEOTIDE SEQUENCE [LARGE SCALE MRNA] OF 1-72</scope>
    <source>
        <strain>cv. Columbia</strain>
    </source>
</reference>
<reference key="4">
    <citation type="journal article" date="2002" name="In Silico Biol.">
        <title>Peptomics, identification of novel cationic Arabidopsis peptides with conserved sequence motifs.</title>
        <authorList>
            <person name="Olsen A.N."/>
            <person name="Mundy J."/>
            <person name="Skriver K."/>
        </authorList>
    </citation>
    <scope>GENE FAMILY</scope>
    <scope>NOMENCLATURE</scope>
</reference>
<accession>A8MQM7</accession>
<name>RLF15_ARATH</name>